<evidence type="ECO:0000255" key="1">
    <source>
        <dbReference type="HAMAP-Rule" id="MF_01013"/>
    </source>
</evidence>
<gene>
    <name evidence="1" type="primary">hisF</name>
    <name type="ordered locus">MMP1722</name>
</gene>
<proteinExistence type="inferred from homology"/>
<keyword id="KW-0028">Amino-acid biosynthesis</keyword>
<keyword id="KW-0963">Cytoplasm</keyword>
<keyword id="KW-0368">Histidine biosynthesis</keyword>
<keyword id="KW-0456">Lyase</keyword>
<keyword id="KW-1185">Reference proteome</keyword>
<protein>
    <recommendedName>
        <fullName evidence="1">Imidazole glycerol phosphate synthase subunit HisF</fullName>
        <ecNumber evidence="1">4.3.2.10</ecNumber>
    </recommendedName>
    <alternativeName>
        <fullName evidence="1">IGP synthase cyclase subunit</fullName>
    </alternativeName>
    <alternativeName>
        <fullName evidence="1">IGP synthase subunit HisF</fullName>
    </alternativeName>
    <alternativeName>
        <fullName evidence="1">ImGP synthase subunit HisF</fullName>
        <shortName evidence="1">IGPS subunit HisF</shortName>
    </alternativeName>
</protein>
<feature type="chain" id="PRO_0000142283" description="Imidazole glycerol phosphate synthase subunit HisF">
    <location>
        <begin position="1"/>
        <end position="272"/>
    </location>
</feature>
<feature type="active site" evidence="1">
    <location>
        <position position="11"/>
    </location>
</feature>
<feature type="active site" evidence="1">
    <location>
        <position position="130"/>
    </location>
</feature>
<comment type="function">
    <text evidence="1">IGPS catalyzes the conversion of PRFAR and glutamine to IGP, AICAR and glutamate. The HisF subunit catalyzes the cyclization activity that produces IGP and AICAR from PRFAR using the ammonia provided by the HisH subunit.</text>
</comment>
<comment type="catalytic activity">
    <reaction evidence="1">
        <text>5-[(5-phospho-1-deoxy-D-ribulos-1-ylimino)methylamino]-1-(5-phospho-beta-D-ribosyl)imidazole-4-carboxamide + L-glutamine = D-erythro-1-(imidazol-4-yl)glycerol 3-phosphate + 5-amino-1-(5-phospho-beta-D-ribosyl)imidazole-4-carboxamide + L-glutamate + H(+)</text>
        <dbReference type="Rhea" id="RHEA:24793"/>
        <dbReference type="ChEBI" id="CHEBI:15378"/>
        <dbReference type="ChEBI" id="CHEBI:29985"/>
        <dbReference type="ChEBI" id="CHEBI:58278"/>
        <dbReference type="ChEBI" id="CHEBI:58359"/>
        <dbReference type="ChEBI" id="CHEBI:58475"/>
        <dbReference type="ChEBI" id="CHEBI:58525"/>
        <dbReference type="EC" id="4.3.2.10"/>
    </reaction>
</comment>
<comment type="pathway">
    <text evidence="1">Amino-acid biosynthesis; L-histidine biosynthesis; L-histidine from 5-phospho-alpha-D-ribose 1-diphosphate: step 5/9.</text>
</comment>
<comment type="subunit">
    <text evidence="1">Heterodimer of HisH and HisF.</text>
</comment>
<comment type="subcellular location">
    <subcellularLocation>
        <location evidence="1">Cytoplasm</location>
    </subcellularLocation>
</comment>
<comment type="similarity">
    <text evidence="1">Belongs to the HisA/HisF family.</text>
</comment>
<sequence>MLTKRIIPCLDIKEGRVVKGTNFVELRDAGDPVELSKIYNEQGADELVFLDITASFEKRDIIIDVVKRTAEQVFIPLTVGGGIKTVDDFRKILRAGADKISINTSAVKTPDLIKEASEIFGTQCVVVAMDVKRKYITDSQDENLKNKNIFETKLGSCWFEVYIYGGREGTGIDAIEWAKKVEYLGAGEILLTSMDADGTKDGYDLVLTKAISENTKLPIIASGGCGNANHVVDAFTEGKADAALMASILHYRECTVNDLKKEVEKNNIPVRF</sequence>
<accession>P62454</accession>
<reference key="1">
    <citation type="journal article" date="2004" name="J. Bacteriol.">
        <title>Complete genome sequence of the genetically tractable hydrogenotrophic methanogen Methanococcus maripaludis.</title>
        <authorList>
            <person name="Hendrickson E.L."/>
            <person name="Kaul R."/>
            <person name="Zhou Y."/>
            <person name="Bovee D."/>
            <person name="Chapman P."/>
            <person name="Chung J."/>
            <person name="Conway de Macario E."/>
            <person name="Dodsworth J.A."/>
            <person name="Gillett W."/>
            <person name="Graham D.E."/>
            <person name="Hackett M."/>
            <person name="Haydock A.K."/>
            <person name="Kang A."/>
            <person name="Land M.L."/>
            <person name="Levy R."/>
            <person name="Lie T.J."/>
            <person name="Major T.A."/>
            <person name="Moore B.C."/>
            <person name="Porat I."/>
            <person name="Palmeiri A."/>
            <person name="Rouse G."/>
            <person name="Saenphimmachak C."/>
            <person name="Soell D."/>
            <person name="Van Dien S."/>
            <person name="Wang T."/>
            <person name="Whitman W.B."/>
            <person name="Xia Q."/>
            <person name="Zhang Y."/>
            <person name="Larimer F.W."/>
            <person name="Olson M.V."/>
            <person name="Leigh J.A."/>
        </authorList>
    </citation>
    <scope>NUCLEOTIDE SEQUENCE [LARGE SCALE GENOMIC DNA]</scope>
    <source>
        <strain>DSM 14266 / JCM 13030 / NBRC 101832 / S2 / LL</strain>
    </source>
</reference>
<organism>
    <name type="scientific">Methanococcus maripaludis (strain DSM 14266 / JCM 13030 / NBRC 101832 / S2 / LL)</name>
    <dbReference type="NCBI Taxonomy" id="267377"/>
    <lineage>
        <taxon>Archaea</taxon>
        <taxon>Methanobacteriati</taxon>
        <taxon>Methanobacteriota</taxon>
        <taxon>Methanomada group</taxon>
        <taxon>Methanococci</taxon>
        <taxon>Methanococcales</taxon>
        <taxon>Methanococcaceae</taxon>
        <taxon>Methanococcus</taxon>
    </lineage>
</organism>
<dbReference type="EC" id="4.3.2.10" evidence="1"/>
<dbReference type="EMBL" id="BX950229">
    <property type="protein sequence ID" value="CAF31278.1"/>
    <property type="molecule type" value="Genomic_DNA"/>
</dbReference>
<dbReference type="RefSeq" id="WP_011171666.1">
    <property type="nucleotide sequence ID" value="NC_005791.1"/>
</dbReference>
<dbReference type="SMR" id="P62454"/>
<dbReference type="STRING" id="267377.MMP1722"/>
<dbReference type="EnsemblBacteria" id="CAF31278">
    <property type="protein sequence ID" value="CAF31278"/>
    <property type="gene ID" value="MMP1722"/>
</dbReference>
<dbReference type="GeneID" id="2761043"/>
<dbReference type="KEGG" id="mmp:MMP1722"/>
<dbReference type="eggNOG" id="arCOG00617">
    <property type="taxonomic scope" value="Archaea"/>
</dbReference>
<dbReference type="HOGENOM" id="CLU_048577_4_0_2"/>
<dbReference type="OrthoDB" id="6261at2157"/>
<dbReference type="UniPathway" id="UPA00031">
    <property type="reaction ID" value="UER00010"/>
</dbReference>
<dbReference type="Proteomes" id="UP000000590">
    <property type="component" value="Chromosome"/>
</dbReference>
<dbReference type="GO" id="GO:0005737">
    <property type="term" value="C:cytoplasm"/>
    <property type="evidence" value="ECO:0007669"/>
    <property type="project" value="UniProtKB-SubCell"/>
</dbReference>
<dbReference type="GO" id="GO:0000107">
    <property type="term" value="F:imidazoleglycerol-phosphate synthase activity"/>
    <property type="evidence" value="ECO:0007669"/>
    <property type="project" value="UniProtKB-UniRule"/>
</dbReference>
<dbReference type="GO" id="GO:0016829">
    <property type="term" value="F:lyase activity"/>
    <property type="evidence" value="ECO:0007669"/>
    <property type="project" value="UniProtKB-KW"/>
</dbReference>
<dbReference type="GO" id="GO:0000105">
    <property type="term" value="P:L-histidine biosynthetic process"/>
    <property type="evidence" value="ECO:0007669"/>
    <property type="project" value="UniProtKB-UniRule"/>
</dbReference>
<dbReference type="CDD" id="cd04731">
    <property type="entry name" value="HisF"/>
    <property type="match status" value="1"/>
</dbReference>
<dbReference type="FunFam" id="3.20.20.70:FF:000006">
    <property type="entry name" value="Imidazole glycerol phosphate synthase subunit HisF"/>
    <property type="match status" value="1"/>
</dbReference>
<dbReference type="Gene3D" id="3.20.20.70">
    <property type="entry name" value="Aldolase class I"/>
    <property type="match status" value="1"/>
</dbReference>
<dbReference type="HAMAP" id="MF_01013">
    <property type="entry name" value="HisF"/>
    <property type="match status" value="1"/>
</dbReference>
<dbReference type="InterPro" id="IPR013785">
    <property type="entry name" value="Aldolase_TIM"/>
</dbReference>
<dbReference type="InterPro" id="IPR006062">
    <property type="entry name" value="His_biosynth"/>
</dbReference>
<dbReference type="InterPro" id="IPR004651">
    <property type="entry name" value="HisF"/>
</dbReference>
<dbReference type="InterPro" id="IPR050064">
    <property type="entry name" value="IGPS_HisA/HisF"/>
</dbReference>
<dbReference type="InterPro" id="IPR011060">
    <property type="entry name" value="RibuloseP-bd_barrel"/>
</dbReference>
<dbReference type="NCBIfam" id="TIGR00735">
    <property type="entry name" value="hisF"/>
    <property type="match status" value="1"/>
</dbReference>
<dbReference type="PANTHER" id="PTHR21235:SF2">
    <property type="entry name" value="IMIDAZOLE GLYCEROL PHOSPHATE SYNTHASE HISHF"/>
    <property type="match status" value="1"/>
</dbReference>
<dbReference type="PANTHER" id="PTHR21235">
    <property type="entry name" value="IMIDAZOLE GLYCEROL PHOSPHATE SYNTHASE SUBUNIT HISF/H IGP SYNTHASE SUBUNIT HISF/H"/>
    <property type="match status" value="1"/>
</dbReference>
<dbReference type="Pfam" id="PF00977">
    <property type="entry name" value="His_biosynth"/>
    <property type="match status" value="1"/>
</dbReference>
<dbReference type="SUPFAM" id="SSF51366">
    <property type="entry name" value="Ribulose-phoshate binding barrel"/>
    <property type="match status" value="1"/>
</dbReference>
<name>HIS6_METMP</name>